<accession>Q5F8F6</accession>
<organism>
    <name type="scientific">Neisseria gonorrhoeae (strain ATCC 700825 / FA 1090)</name>
    <dbReference type="NCBI Taxonomy" id="242231"/>
    <lineage>
        <taxon>Bacteria</taxon>
        <taxon>Pseudomonadati</taxon>
        <taxon>Pseudomonadota</taxon>
        <taxon>Betaproteobacteria</taxon>
        <taxon>Neisseriales</taxon>
        <taxon>Neisseriaceae</taxon>
        <taxon>Neisseria</taxon>
    </lineage>
</organism>
<proteinExistence type="inferred from homology"/>
<reference key="1">
    <citation type="submission" date="2003-03" db="EMBL/GenBank/DDBJ databases">
        <title>The complete genome sequence of Neisseria gonorrhoeae.</title>
        <authorList>
            <person name="Lewis L.A."/>
            <person name="Gillaspy A.F."/>
            <person name="McLaughlin R.E."/>
            <person name="Gipson M."/>
            <person name="Ducey T.F."/>
            <person name="Ownbey T."/>
            <person name="Hartman K."/>
            <person name="Nydick C."/>
            <person name="Carson M.B."/>
            <person name="Vaughn J."/>
            <person name="Thomson C."/>
            <person name="Song L."/>
            <person name="Lin S."/>
            <person name="Yuan X."/>
            <person name="Najar F."/>
            <person name="Zhan M."/>
            <person name="Ren Q."/>
            <person name="Zhu H."/>
            <person name="Qi S."/>
            <person name="Kenton S.M."/>
            <person name="Lai H."/>
            <person name="White J.D."/>
            <person name="Clifton S."/>
            <person name="Roe B.A."/>
            <person name="Dyer D.W."/>
        </authorList>
    </citation>
    <scope>NUCLEOTIDE SEQUENCE [LARGE SCALE GENOMIC DNA]</scope>
    <source>
        <strain>ATCC 700825 / FA 1090</strain>
    </source>
</reference>
<protein>
    <recommendedName>
        <fullName evidence="1">tRNA(Ile)-lysidine synthase</fullName>
        <ecNumber evidence="1">6.3.4.19</ecNumber>
    </recommendedName>
    <alternativeName>
        <fullName evidence="1">tRNA(Ile)-2-lysyl-cytidine synthase</fullName>
    </alternativeName>
    <alternativeName>
        <fullName evidence="1">tRNA(Ile)-lysidine synthetase</fullName>
    </alternativeName>
</protein>
<dbReference type="EC" id="6.3.4.19" evidence="1"/>
<dbReference type="EMBL" id="AE004969">
    <property type="protein sequence ID" value="AAW89531.2"/>
    <property type="molecule type" value="Genomic_DNA"/>
</dbReference>
<dbReference type="SMR" id="Q5F8F6"/>
<dbReference type="STRING" id="242231.NGO_0820"/>
<dbReference type="KEGG" id="ngo:NGO_0820"/>
<dbReference type="PATRIC" id="fig|242231.10.peg.967"/>
<dbReference type="HOGENOM" id="CLU_018869_2_0_4"/>
<dbReference type="Proteomes" id="UP000000535">
    <property type="component" value="Chromosome"/>
</dbReference>
<dbReference type="GO" id="GO:0005737">
    <property type="term" value="C:cytoplasm"/>
    <property type="evidence" value="ECO:0007669"/>
    <property type="project" value="UniProtKB-SubCell"/>
</dbReference>
<dbReference type="GO" id="GO:0005524">
    <property type="term" value="F:ATP binding"/>
    <property type="evidence" value="ECO:0007669"/>
    <property type="project" value="UniProtKB-UniRule"/>
</dbReference>
<dbReference type="GO" id="GO:0032267">
    <property type="term" value="F:tRNA(Ile)-lysidine synthase activity"/>
    <property type="evidence" value="ECO:0007669"/>
    <property type="project" value="UniProtKB-EC"/>
</dbReference>
<dbReference type="GO" id="GO:0006400">
    <property type="term" value="P:tRNA modification"/>
    <property type="evidence" value="ECO:0007669"/>
    <property type="project" value="UniProtKB-UniRule"/>
</dbReference>
<dbReference type="CDD" id="cd01992">
    <property type="entry name" value="TilS_N"/>
    <property type="match status" value="1"/>
</dbReference>
<dbReference type="Gene3D" id="1.20.59.20">
    <property type="match status" value="1"/>
</dbReference>
<dbReference type="Gene3D" id="3.40.50.620">
    <property type="entry name" value="HUPs"/>
    <property type="match status" value="1"/>
</dbReference>
<dbReference type="HAMAP" id="MF_01161">
    <property type="entry name" value="tRNA_Ile_lys_synt"/>
    <property type="match status" value="1"/>
</dbReference>
<dbReference type="InterPro" id="IPR012796">
    <property type="entry name" value="Lysidine-tRNA-synth_C"/>
</dbReference>
<dbReference type="InterPro" id="IPR014729">
    <property type="entry name" value="Rossmann-like_a/b/a_fold"/>
</dbReference>
<dbReference type="InterPro" id="IPR011063">
    <property type="entry name" value="TilS/TtcA_N"/>
</dbReference>
<dbReference type="InterPro" id="IPR012094">
    <property type="entry name" value="tRNA_Ile_lys_synt"/>
</dbReference>
<dbReference type="InterPro" id="IPR012795">
    <property type="entry name" value="tRNA_Ile_lys_synt_N"/>
</dbReference>
<dbReference type="InterPro" id="IPR015262">
    <property type="entry name" value="tRNA_Ile_lys_synt_subst-bd"/>
</dbReference>
<dbReference type="NCBIfam" id="TIGR02433">
    <property type="entry name" value="lysidine_TilS_C"/>
    <property type="match status" value="1"/>
</dbReference>
<dbReference type="NCBIfam" id="TIGR02432">
    <property type="entry name" value="lysidine_TilS_N"/>
    <property type="match status" value="1"/>
</dbReference>
<dbReference type="PANTHER" id="PTHR43033">
    <property type="entry name" value="TRNA(ILE)-LYSIDINE SYNTHASE-RELATED"/>
    <property type="match status" value="1"/>
</dbReference>
<dbReference type="PANTHER" id="PTHR43033:SF1">
    <property type="entry name" value="TRNA(ILE)-LYSIDINE SYNTHASE-RELATED"/>
    <property type="match status" value="1"/>
</dbReference>
<dbReference type="Pfam" id="PF01171">
    <property type="entry name" value="ATP_bind_3"/>
    <property type="match status" value="1"/>
</dbReference>
<dbReference type="Pfam" id="PF09179">
    <property type="entry name" value="TilS"/>
    <property type="match status" value="1"/>
</dbReference>
<dbReference type="SMART" id="SM00977">
    <property type="entry name" value="TilS_C"/>
    <property type="match status" value="1"/>
</dbReference>
<dbReference type="SUPFAM" id="SSF52402">
    <property type="entry name" value="Adenine nucleotide alpha hydrolases-like"/>
    <property type="match status" value="1"/>
</dbReference>
<dbReference type="SUPFAM" id="SSF82829">
    <property type="entry name" value="MesJ substrate recognition domain-like"/>
    <property type="match status" value="1"/>
</dbReference>
<evidence type="ECO:0000255" key="1">
    <source>
        <dbReference type="HAMAP-Rule" id="MF_01161"/>
    </source>
</evidence>
<comment type="function">
    <text evidence="1">Ligates lysine onto the cytidine present at position 34 of the AUA codon-specific tRNA(Ile) that contains the anticodon CAU, in an ATP-dependent manner. Cytidine is converted to lysidine, thus changing the amino acid specificity of the tRNA from methionine to isoleucine.</text>
</comment>
<comment type="catalytic activity">
    <reaction evidence="1">
        <text>cytidine(34) in tRNA(Ile2) + L-lysine + ATP = lysidine(34) in tRNA(Ile2) + AMP + diphosphate + H(+)</text>
        <dbReference type="Rhea" id="RHEA:43744"/>
        <dbReference type="Rhea" id="RHEA-COMP:10625"/>
        <dbReference type="Rhea" id="RHEA-COMP:10670"/>
        <dbReference type="ChEBI" id="CHEBI:15378"/>
        <dbReference type="ChEBI" id="CHEBI:30616"/>
        <dbReference type="ChEBI" id="CHEBI:32551"/>
        <dbReference type="ChEBI" id="CHEBI:33019"/>
        <dbReference type="ChEBI" id="CHEBI:82748"/>
        <dbReference type="ChEBI" id="CHEBI:83665"/>
        <dbReference type="ChEBI" id="CHEBI:456215"/>
        <dbReference type="EC" id="6.3.4.19"/>
    </reaction>
</comment>
<comment type="subcellular location">
    <subcellularLocation>
        <location evidence="1">Cytoplasm</location>
    </subcellularLocation>
</comment>
<comment type="domain">
    <text>The N-terminal region contains the highly conserved SGGXDS motif, predicted to be a P-loop motif involved in ATP binding.</text>
</comment>
<comment type="similarity">
    <text evidence="1">Belongs to the tRNA(Ile)-lysidine synthase family.</text>
</comment>
<gene>
    <name evidence="1" type="primary">tilS</name>
    <name type="ordered locus">NGO_0820</name>
</gene>
<sequence>MLFLYRDEAVLTLDAFEQCLKDCFPQGLNGKKTAVALSGGLDSVVLLHLLVCAGKRAGFVPEALHIHHGLSPRADDWADFCRNYCDMLGVGLETVKVCVEKNGLGIEAAARQKRYAEFAEKGFDVLALAHHRDDQIETFMLAVARGGGLRALAAMPAVRPLGENGIIWRPLLPFSRQDIWDYARKHGLPNIEDESNTDTAYLRNRFRHRILPELSAQIPHFGRHVLNNVRALQEDLALLEEVVVQDCRWVCGAGYFDTARWLTFSPRRKTHILRNFLKENGIPVPNQNALADIARVLTEAKTGRWNLQGFELHHYAGRLFVFASEQLAKPAFLKDGTISGNLKKILTEHRFVLKRHPFGLPEAMLEQDGILRTVAASDTLAVGGIHKNVKKILQGKRVLPFLRPIWPLVADSGNRPLALANCCADFQISVSDGILPVHPDFPILF</sequence>
<feature type="chain" id="PRO_1000065619" description="tRNA(Ile)-lysidine synthase">
    <location>
        <begin position="1"/>
        <end position="445"/>
    </location>
</feature>
<feature type="binding site" evidence="1">
    <location>
        <begin position="38"/>
        <end position="43"/>
    </location>
    <ligand>
        <name>ATP</name>
        <dbReference type="ChEBI" id="CHEBI:30616"/>
    </ligand>
</feature>
<name>TILS_NEIG1</name>
<keyword id="KW-0067">ATP-binding</keyword>
<keyword id="KW-0963">Cytoplasm</keyword>
<keyword id="KW-0436">Ligase</keyword>
<keyword id="KW-0547">Nucleotide-binding</keyword>
<keyword id="KW-1185">Reference proteome</keyword>
<keyword id="KW-0819">tRNA processing</keyword>